<comment type="function">
    <text evidence="1">Involved in efficient integration of the N-module into mitochondrial respiratory chain complex I.</text>
</comment>
<comment type="subcellular location">
    <subcellularLocation>
        <location evidence="1">Mitochondrion</location>
    </subcellularLocation>
</comment>
<comment type="similarity">
    <text evidence="3">Belongs to the complex I LYR family.</text>
</comment>
<keyword id="KW-0496">Mitochondrion</keyword>
<keyword id="KW-1185">Reference proteome</keyword>
<keyword id="KW-0809">Transit peptide</keyword>
<sequence>MGSRLPPAALTLKQFLVRQQVLGLYRKILRSVRQIPDAADQRYMQEWAREEFRRNKGATEEIAIRMMITHGQRQLQELERALHLAKS</sequence>
<dbReference type="EMBL" id="BC167424">
    <property type="protein sequence ID" value="AAI67424.1"/>
    <property type="molecule type" value="mRNA"/>
</dbReference>
<dbReference type="EMBL" id="BC167425">
    <property type="protein sequence ID" value="AAI67425.1"/>
    <property type="molecule type" value="mRNA"/>
</dbReference>
<dbReference type="RefSeq" id="NP_001165155.1">
    <property type="nucleotide sequence ID" value="NM_001171684.1"/>
</dbReference>
<dbReference type="SMR" id="B3DLF3"/>
<dbReference type="FunCoup" id="B3DLF3">
    <property type="interactions" value="957"/>
</dbReference>
<dbReference type="PaxDb" id="8364-ENSXETP00000027870"/>
<dbReference type="GeneID" id="100170492"/>
<dbReference type="KEGG" id="xtr:100170492"/>
<dbReference type="AGR" id="Xenbase:XB-GENE-5753220"/>
<dbReference type="CTD" id="57226"/>
<dbReference type="Xenbase" id="XB-GENE-5753220">
    <property type="gene designation" value="lyrm2"/>
</dbReference>
<dbReference type="eggNOG" id="ENOG502S8DG">
    <property type="taxonomic scope" value="Eukaryota"/>
</dbReference>
<dbReference type="InParanoid" id="B3DLF3"/>
<dbReference type="OMA" id="YMRDWAR"/>
<dbReference type="OrthoDB" id="74240at2759"/>
<dbReference type="Proteomes" id="UP000008143">
    <property type="component" value="Chromosome 1"/>
</dbReference>
<dbReference type="Bgee" id="ENSXETG00000012750">
    <property type="expression patterns" value="Expressed in skeletal muscle tissue and 12 other cell types or tissues"/>
</dbReference>
<dbReference type="GO" id="GO:0005739">
    <property type="term" value="C:mitochondrion"/>
    <property type="evidence" value="ECO:0007669"/>
    <property type="project" value="UniProtKB-SubCell"/>
</dbReference>
<dbReference type="GO" id="GO:0032981">
    <property type="term" value="P:mitochondrial respiratory chain complex I assembly"/>
    <property type="evidence" value="ECO:0000250"/>
    <property type="project" value="UniProtKB"/>
</dbReference>
<dbReference type="CDD" id="cd20262">
    <property type="entry name" value="Complex1_LYR_LYRM2"/>
    <property type="match status" value="1"/>
</dbReference>
<dbReference type="InterPro" id="IPR008011">
    <property type="entry name" value="Complex1_LYR_dom"/>
</dbReference>
<dbReference type="InterPro" id="IPR045293">
    <property type="entry name" value="Complex1_LYR_LYRM2"/>
</dbReference>
<dbReference type="PANTHER" id="PTHR13675">
    <property type="entry name" value="LYR MOTIF-CONTAINING PROTEIN 2"/>
    <property type="match status" value="1"/>
</dbReference>
<dbReference type="PANTHER" id="PTHR13675:SF0">
    <property type="entry name" value="LYR MOTIF-CONTAINING PROTEIN 2"/>
    <property type="match status" value="1"/>
</dbReference>
<dbReference type="Pfam" id="PF05347">
    <property type="entry name" value="Complex1_LYR"/>
    <property type="match status" value="1"/>
</dbReference>
<name>LYRM2_XENTR</name>
<gene>
    <name type="primary">lyrm2</name>
</gene>
<accession>B3DLF3</accession>
<protein>
    <recommendedName>
        <fullName>LYR motif-containing protein 2</fullName>
    </recommendedName>
</protein>
<organism>
    <name type="scientific">Xenopus tropicalis</name>
    <name type="common">Western clawed frog</name>
    <name type="synonym">Silurana tropicalis</name>
    <dbReference type="NCBI Taxonomy" id="8364"/>
    <lineage>
        <taxon>Eukaryota</taxon>
        <taxon>Metazoa</taxon>
        <taxon>Chordata</taxon>
        <taxon>Craniata</taxon>
        <taxon>Vertebrata</taxon>
        <taxon>Euteleostomi</taxon>
        <taxon>Amphibia</taxon>
        <taxon>Batrachia</taxon>
        <taxon>Anura</taxon>
        <taxon>Pipoidea</taxon>
        <taxon>Pipidae</taxon>
        <taxon>Xenopodinae</taxon>
        <taxon>Xenopus</taxon>
        <taxon>Silurana</taxon>
    </lineage>
</organism>
<feature type="transit peptide" description="Mitochondrion" evidence="2">
    <location>
        <begin position="1"/>
        <end position="19"/>
    </location>
</feature>
<feature type="chain" id="PRO_0000359765" description="LYR motif-containing protein 2">
    <location>
        <begin position="20"/>
        <end position="87"/>
    </location>
</feature>
<reference key="1">
    <citation type="submission" date="2008-06" db="EMBL/GenBank/DDBJ databases">
        <authorList>
            <consortium name="NIH - Xenopus Gene Collection (XGC) project"/>
        </authorList>
    </citation>
    <scope>NUCLEOTIDE SEQUENCE [LARGE SCALE MRNA]</scope>
    <source>
        <tissue>Embryo</tissue>
    </source>
</reference>
<proteinExistence type="inferred from homology"/>
<evidence type="ECO:0000250" key="1">
    <source>
        <dbReference type="UniProtKB" id="Q9NU23"/>
    </source>
</evidence>
<evidence type="ECO:0000255" key="2"/>
<evidence type="ECO:0000305" key="3"/>